<dbReference type="EC" id="7.1.1.-" evidence="1"/>
<dbReference type="EMBL" id="CP000686">
    <property type="protein sequence ID" value="ABQ92031.1"/>
    <property type="molecule type" value="Genomic_DNA"/>
</dbReference>
<dbReference type="RefSeq" id="WP_011958373.1">
    <property type="nucleotide sequence ID" value="NC_009523.1"/>
</dbReference>
<dbReference type="SMR" id="A5UZH8"/>
<dbReference type="STRING" id="357808.RoseRS_3676"/>
<dbReference type="KEGG" id="rrs:RoseRS_3676"/>
<dbReference type="eggNOG" id="COG0852">
    <property type="taxonomic scope" value="Bacteria"/>
</dbReference>
<dbReference type="HOGENOM" id="CLU_042628_6_0_0"/>
<dbReference type="OrthoDB" id="9803286at2"/>
<dbReference type="Proteomes" id="UP000006554">
    <property type="component" value="Chromosome"/>
</dbReference>
<dbReference type="GO" id="GO:0005886">
    <property type="term" value="C:plasma membrane"/>
    <property type="evidence" value="ECO:0007669"/>
    <property type="project" value="UniProtKB-SubCell"/>
</dbReference>
<dbReference type="GO" id="GO:0008137">
    <property type="term" value="F:NADH dehydrogenase (ubiquinone) activity"/>
    <property type="evidence" value="ECO:0007669"/>
    <property type="project" value="InterPro"/>
</dbReference>
<dbReference type="GO" id="GO:0050136">
    <property type="term" value="F:NADH:ubiquinone reductase (non-electrogenic) activity"/>
    <property type="evidence" value="ECO:0007669"/>
    <property type="project" value="UniProtKB-UniRule"/>
</dbReference>
<dbReference type="GO" id="GO:0048038">
    <property type="term" value="F:quinone binding"/>
    <property type="evidence" value="ECO:0007669"/>
    <property type="project" value="UniProtKB-KW"/>
</dbReference>
<dbReference type="Gene3D" id="3.30.460.80">
    <property type="entry name" value="NADH:ubiquinone oxidoreductase, 30kDa subunit"/>
    <property type="match status" value="1"/>
</dbReference>
<dbReference type="HAMAP" id="MF_01357">
    <property type="entry name" value="NDH1_NuoC"/>
    <property type="match status" value="1"/>
</dbReference>
<dbReference type="InterPro" id="IPR010218">
    <property type="entry name" value="NADH_DH_suC"/>
</dbReference>
<dbReference type="InterPro" id="IPR037232">
    <property type="entry name" value="NADH_quin_OxRdtase_su_C/D-like"/>
</dbReference>
<dbReference type="InterPro" id="IPR001268">
    <property type="entry name" value="NADH_UbQ_OxRdtase_30kDa_su"/>
</dbReference>
<dbReference type="NCBIfam" id="TIGR01961">
    <property type="entry name" value="NuoC_fam"/>
    <property type="match status" value="1"/>
</dbReference>
<dbReference type="PANTHER" id="PTHR10884:SF14">
    <property type="entry name" value="NADH DEHYDROGENASE [UBIQUINONE] IRON-SULFUR PROTEIN 3, MITOCHONDRIAL"/>
    <property type="match status" value="1"/>
</dbReference>
<dbReference type="PANTHER" id="PTHR10884">
    <property type="entry name" value="NADH DEHYDROGENASE UBIQUINONE IRON-SULFUR PROTEIN 3"/>
    <property type="match status" value="1"/>
</dbReference>
<dbReference type="Pfam" id="PF00329">
    <property type="entry name" value="Complex1_30kDa"/>
    <property type="match status" value="1"/>
</dbReference>
<dbReference type="SUPFAM" id="SSF143243">
    <property type="entry name" value="Nqo5-like"/>
    <property type="match status" value="1"/>
</dbReference>
<proteinExistence type="inferred from homology"/>
<feature type="chain" id="PRO_0000358192" description="NADH-quinone oxidoreductase subunit C">
    <location>
        <begin position="1"/>
        <end position="174"/>
    </location>
</feature>
<reference key="1">
    <citation type="submission" date="2007-04" db="EMBL/GenBank/DDBJ databases">
        <title>Complete sequence of Roseiflexus sp. RS-1.</title>
        <authorList>
            <consortium name="US DOE Joint Genome Institute"/>
            <person name="Copeland A."/>
            <person name="Lucas S."/>
            <person name="Lapidus A."/>
            <person name="Barry K."/>
            <person name="Detter J.C."/>
            <person name="Glavina del Rio T."/>
            <person name="Hammon N."/>
            <person name="Israni S."/>
            <person name="Dalin E."/>
            <person name="Tice H."/>
            <person name="Pitluck S."/>
            <person name="Chertkov O."/>
            <person name="Brettin T."/>
            <person name="Bruce D."/>
            <person name="Han C."/>
            <person name="Schmutz J."/>
            <person name="Larimer F."/>
            <person name="Land M."/>
            <person name="Hauser L."/>
            <person name="Kyrpides N."/>
            <person name="Mikhailova N."/>
            <person name="Bryant D.A."/>
            <person name="Richardson P."/>
        </authorList>
    </citation>
    <scope>NUCLEOTIDE SEQUENCE [LARGE SCALE GENOMIC DNA]</scope>
    <source>
        <strain>RS-1</strain>
    </source>
</reference>
<organism>
    <name type="scientific">Roseiflexus sp. (strain RS-1)</name>
    <dbReference type="NCBI Taxonomy" id="357808"/>
    <lineage>
        <taxon>Bacteria</taxon>
        <taxon>Bacillati</taxon>
        <taxon>Chloroflexota</taxon>
        <taxon>Chloroflexia</taxon>
        <taxon>Chloroflexales</taxon>
        <taxon>Roseiflexineae</taxon>
        <taxon>Roseiflexaceae</taxon>
        <taxon>Roseiflexus</taxon>
    </lineage>
</organism>
<sequence>MALDNATVLERLRAALPDAILGSAEFRGDLSVYVRPERIVDVARFLRDDPELRFNFLENLCGVDYLGREPRFEVVYHLISFTNRSRICLKVGVDEHNPSVPSLTGLWPGANYHERETFDMFGIIFTGHPCLERILMPEDWEGHPLRKDVPLGAEEVAFTFNQDRIYAHKPFAKE</sequence>
<evidence type="ECO:0000255" key="1">
    <source>
        <dbReference type="HAMAP-Rule" id="MF_01357"/>
    </source>
</evidence>
<gene>
    <name evidence="1" type="primary">nuoC</name>
    <name type="ordered locus">RoseRS_3676</name>
</gene>
<accession>A5UZH8</accession>
<name>NUOC_ROSS1</name>
<protein>
    <recommendedName>
        <fullName evidence="1">NADH-quinone oxidoreductase subunit C</fullName>
        <ecNumber evidence="1">7.1.1.-</ecNumber>
    </recommendedName>
    <alternativeName>
        <fullName evidence="1">NADH dehydrogenase I subunit C</fullName>
    </alternativeName>
    <alternativeName>
        <fullName evidence="1">NDH-1 subunit C</fullName>
    </alternativeName>
</protein>
<keyword id="KW-1003">Cell membrane</keyword>
<keyword id="KW-0472">Membrane</keyword>
<keyword id="KW-0520">NAD</keyword>
<keyword id="KW-0874">Quinone</keyword>
<keyword id="KW-1278">Translocase</keyword>
<keyword id="KW-0813">Transport</keyword>
<keyword id="KW-0830">Ubiquinone</keyword>
<comment type="function">
    <text evidence="1">NDH-1 shuttles electrons from NADH, via FMN and iron-sulfur (Fe-S) centers, to quinones in the respiratory chain. The immediate electron acceptor for the enzyme in this species is believed to be ubiquinone. Couples the redox reaction to proton translocation (for every two electrons transferred, four hydrogen ions are translocated across the cytoplasmic membrane), and thus conserves the redox energy in a proton gradient.</text>
</comment>
<comment type="catalytic activity">
    <reaction evidence="1">
        <text>a quinone + NADH + 5 H(+)(in) = a quinol + NAD(+) + 4 H(+)(out)</text>
        <dbReference type="Rhea" id="RHEA:57888"/>
        <dbReference type="ChEBI" id="CHEBI:15378"/>
        <dbReference type="ChEBI" id="CHEBI:24646"/>
        <dbReference type="ChEBI" id="CHEBI:57540"/>
        <dbReference type="ChEBI" id="CHEBI:57945"/>
        <dbReference type="ChEBI" id="CHEBI:132124"/>
    </reaction>
</comment>
<comment type="subunit">
    <text evidence="1">NDH-1 is composed of 14 different subunits. Subunits NuoB, C, D, E, F, and G constitute the peripheral sector of the complex.</text>
</comment>
<comment type="subcellular location">
    <subcellularLocation>
        <location evidence="1">Cell membrane</location>
        <topology evidence="1">Peripheral membrane protein</topology>
        <orientation evidence="1">Cytoplasmic side</orientation>
    </subcellularLocation>
</comment>
<comment type="similarity">
    <text evidence="1">Belongs to the complex I 30 kDa subunit family.</text>
</comment>